<evidence type="ECO:0000255" key="1">
    <source>
        <dbReference type="HAMAP-Rule" id="MF_01719"/>
    </source>
</evidence>
<evidence type="ECO:0000305" key="2"/>
<sequence>MAQLLDSPGFIERSAAVPHKAAAAPATRDAAAPAAVPGAAVSFELVGKVFDGPRGPAAALREVTLDIARGGVFGVIGRSGAGKSTLLRLVNGLERPTSGAVRVNGVDVGTLDERGLVALRRRIGMVFQHFNLLSAKTVAQNIGLPLKIAGVPKAERARKVDALLDLVGLAAKRDAYPASLSGGQKQRVGIARALVHDPALLLCDEATSALDPETTQSILALLADINRRLGLTIMLITHEMEVIRAVCDTVAVVEQGEVVETGPVWRVFGDPRHGATRALLRTLVHDLPADLAARVRPLDGAAPLPCGAQLLLDVRYTGASGGEPDLGALTAALARNVGDAVHFVHGGLDRIQGRVQGRLVIAASLAARGAAGPDRIAAALAAARRHANRVEVLGYV</sequence>
<feature type="chain" id="PRO_0000270266" description="Methionine import ATP-binding protein MetN 2">
    <location>
        <begin position="1"/>
        <end position="396"/>
    </location>
</feature>
<feature type="domain" description="ABC transporter" evidence="1">
    <location>
        <begin position="41"/>
        <end position="280"/>
    </location>
</feature>
<feature type="binding site" evidence="1">
    <location>
        <begin position="77"/>
        <end position="84"/>
    </location>
    <ligand>
        <name>ATP</name>
        <dbReference type="ChEBI" id="CHEBI:30616"/>
    </ligand>
</feature>
<name>METN2_BURPS</name>
<accession>Q63NI4</accession>
<protein>
    <recommendedName>
        <fullName evidence="1">Methionine import ATP-binding protein MetN 2</fullName>
        <ecNumber evidence="1">7.4.2.11</ecNumber>
    </recommendedName>
</protein>
<reference key="1">
    <citation type="journal article" date="2004" name="Proc. Natl. Acad. Sci. U.S.A.">
        <title>Genomic plasticity of the causative agent of melioidosis, Burkholderia pseudomallei.</title>
        <authorList>
            <person name="Holden M.T.G."/>
            <person name="Titball R.W."/>
            <person name="Peacock S.J."/>
            <person name="Cerdeno-Tarraga A.-M."/>
            <person name="Atkins T."/>
            <person name="Crossman L.C."/>
            <person name="Pitt T."/>
            <person name="Churcher C."/>
            <person name="Mungall K.L."/>
            <person name="Bentley S.D."/>
            <person name="Sebaihia M."/>
            <person name="Thomson N.R."/>
            <person name="Bason N."/>
            <person name="Beacham I.R."/>
            <person name="Brooks K."/>
            <person name="Brown K.A."/>
            <person name="Brown N.F."/>
            <person name="Challis G.L."/>
            <person name="Cherevach I."/>
            <person name="Chillingworth T."/>
            <person name="Cronin A."/>
            <person name="Crossett B."/>
            <person name="Davis P."/>
            <person name="DeShazer D."/>
            <person name="Feltwell T."/>
            <person name="Fraser A."/>
            <person name="Hance Z."/>
            <person name="Hauser H."/>
            <person name="Holroyd S."/>
            <person name="Jagels K."/>
            <person name="Keith K.E."/>
            <person name="Maddison M."/>
            <person name="Moule S."/>
            <person name="Price C."/>
            <person name="Quail M.A."/>
            <person name="Rabbinowitsch E."/>
            <person name="Rutherford K."/>
            <person name="Sanders M."/>
            <person name="Simmonds M."/>
            <person name="Songsivilai S."/>
            <person name="Stevens K."/>
            <person name="Tumapa S."/>
            <person name="Vesaratchavest M."/>
            <person name="Whitehead S."/>
            <person name="Yeats C."/>
            <person name="Barrell B.G."/>
            <person name="Oyston P.C.F."/>
            <person name="Parkhill J."/>
        </authorList>
    </citation>
    <scope>NUCLEOTIDE SEQUENCE [LARGE SCALE GENOMIC DNA]</scope>
    <source>
        <strain>K96243</strain>
    </source>
</reference>
<proteinExistence type="inferred from homology"/>
<organism>
    <name type="scientific">Burkholderia pseudomallei (strain K96243)</name>
    <dbReference type="NCBI Taxonomy" id="272560"/>
    <lineage>
        <taxon>Bacteria</taxon>
        <taxon>Pseudomonadati</taxon>
        <taxon>Pseudomonadota</taxon>
        <taxon>Betaproteobacteria</taxon>
        <taxon>Burkholderiales</taxon>
        <taxon>Burkholderiaceae</taxon>
        <taxon>Burkholderia</taxon>
        <taxon>pseudomallei group</taxon>
    </lineage>
</organism>
<comment type="function">
    <text evidence="1">Part of the ABC transporter complex MetNIQ involved in methionine import. Responsible for energy coupling to the transport system.</text>
</comment>
<comment type="catalytic activity">
    <reaction evidence="1">
        <text>L-methionine(out) + ATP + H2O = L-methionine(in) + ADP + phosphate + H(+)</text>
        <dbReference type="Rhea" id="RHEA:29779"/>
        <dbReference type="ChEBI" id="CHEBI:15377"/>
        <dbReference type="ChEBI" id="CHEBI:15378"/>
        <dbReference type="ChEBI" id="CHEBI:30616"/>
        <dbReference type="ChEBI" id="CHEBI:43474"/>
        <dbReference type="ChEBI" id="CHEBI:57844"/>
        <dbReference type="ChEBI" id="CHEBI:456216"/>
        <dbReference type="EC" id="7.4.2.11"/>
    </reaction>
</comment>
<comment type="catalytic activity">
    <reaction evidence="1">
        <text>D-methionine(out) + ATP + H2O = D-methionine(in) + ADP + phosphate + H(+)</text>
        <dbReference type="Rhea" id="RHEA:29767"/>
        <dbReference type="ChEBI" id="CHEBI:15377"/>
        <dbReference type="ChEBI" id="CHEBI:15378"/>
        <dbReference type="ChEBI" id="CHEBI:30616"/>
        <dbReference type="ChEBI" id="CHEBI:43474"/>
        <dbReference type="ChEBI" id="CHEBI:57932"/>
        <dbReference type="ChEBI" id="CHEBI:456216"/>
        <dbReference type="EC" id="7.4.2.11"/>
    </reaction>
</comment>
<comment type="subunit">
    <text evidence="1">The complex is composed of two ATP-binding proteins (MetN), two transmembrane proteins (MetI) and a solute-binding protein (MetQ).</text>
</comment>
<comment type="subcellular location">
    <subcellularLocation>
        <location evidence="1">Cell inner membrane</location>
        <topology evidence="1">Peripheral membrane protein</topology>
    </subcellularLocation>
</comment>
<comment type="similarity">
    <text evidence="1">Belongs to the ABC transporter superfamily. Methionine importer (TC 3.A.1.24) family.</text>
</comment>
<comment type="sequence caution" evidence="2">
    <conflict type="erroneous initiation">
        <sequence resource="EMBL-CDS" id="CAH37763"/>
    </conflict>
</comment>
<gene>
    <name evidence="1" type="primary">metN2</name>
    <name type="ordered locus">BPSS0315</name>
</gene>
<keyword id="KW-0029">Amino-acid transport</keyword>
<keyword id="KW-0067">ATP-binding</keyword>
<keyword id="KW-0997">Cell inner membrane</keyword>
<keyword id="KW-1003">Cell membrane</keyword>
<keyword id="KW-0472">Membrane</keyword>
<keyword id="KW-0547">Nucleotide-binding</keyword>
<keyword id="KW-1185">Reference proteome</keyword>
<keyword id="KW-1278">Translocase</keyword>
<keyword id="KW-0813">Transport</keyword>
<dbReference type="EC" id="7.4.2.11" evidence="1"/>
<dbReference type="EMBL" id="BX571966">
    <property type="protein sequence ID" value="CAH37763.1"/>
    <property type="status" value="ALT_INIT"/>
    <property type="molecule type" value="Genomic_DNA"/>
</dbReference>
<dbReference type="RefSeq" id="YP_110335.1">
    <property type="nucleotide sequence ID" value="NC_006351.1"/>
</dbReference>
<dbReference type="SMR" id="Q63NI4"/>
<dbReference type="STRING" id="272560.BPSS0315"/>
<dbReference type="KEGG" id="bps:BPSS0315"/>
<dbReference type="PATRIC" id="fig|272560.51.peg.6428"/>
<dbReference type="eggNOG" id="COG1135">
    <property type="taxonomic scope" value="Bacteria"/>
</dbReference>
<dbReference type="Proteomes" id="UP000000605">
    <property type="component" value="Chromosome 2"/>
</dbReference>
<dbReference type="GO" id="GO:0005886">
    <property type="term" value="C:plasma membrane"/>
    <property type="evidence" value="ECO:0007669"/>
    <property type="project" value="UniProtKB-SubCell"/>
</dbReference>
<dbReference type="GO" id="GO:0033232">
    <property type="term" value="F:ABC-type D-methionine transporter activity"/>
    <property type="evidence" value="ECO:0007669"/>
    <property type="project" value="UniProtKB-EC"/>
</dbReference>
<dbReference type="GO" id="GO:0005524">
    <property type="term" value="F:ATP binding"/>
    <property type="evidence" value="ECO:0007669"/>
    <property type="project" value="UniProtKB-KW"/>
</dbReference>
<dbReference type="GO" id="GO:0016887">
    <property type="term" value="F:ATP hydrolysis activity"/>
    <property type="evidence" value="ECO:0007669"/>
    <property type="project" value="InterPro"/>
</dbReference>
<dbReference type="CDD" id="cd03258">
    <property type="entry name" value="ABC_MetN_methionine_transporter"/>
    <property type="match status" value="1"/>
</dbReference>
<dbReference type="FunFam" id="3.40.50.300:FF:000056">
    <property type="entry name" value="Cell division ATP-binding protein FtsE"/>
    <property type="match status" value="1"/>
</dbReference>
<dbReference type="Gene3D" id="3.40.50.300">
    <property type="entry name" value="P-loop containing nucleotide triphosphate hydrolases"/>
    <property type="match status" value="1"/>
</dbReference>
<dbReference type="InterPro" id="IPR003593">
    <property type="entry name" value="AAA+_ATPase"/>
</dbReference>
<dbReference type="InterPro" id="IPR003439">
    <property type="entry name" value="ABC_transporter-like_ATP-bd"/>
</dbReference>
<dbReference type="InterPro" id="IPR017871">
    <property type="entry name" value="ABC_transporter-like_CS"/>
</dbReference>
<dbReference type="InterPro" id="IPR045865">
    <property type="entry name" value="ACT-like_dom_sf"/>
</dbReference>
<dbReference type="InterPro" id="IPR041701">
    <property type="entry name" value="MetN_ABC"/>
</dbReference>
<dbReference type="InterPro" id="IPR050086">
    <property type="entry name" value="MetN_ABC_transporter-like"/>
</dbReference>
<dbReference type="InterPro" id="IPR018449">
    <property type="entry name" value="NIL_domain"/>
</dbReference>
<dbReference type="InterPro" id="IPR027417">
    <property type="entry name" value="P-loop_NTPase"/>
</dbReference>
<dbReference type="PANTHER" id="PTHR43166">
    <property type="entry name" value="AMINO ACID IMPORT ATP-BINDING PROTEIN"/>
    <property type="match status" value="1"/>
</dbReference>
<dbReference type="PANTHER" id="PTHR43166:SF30">
    <property type="entry name" value="METHIONINE IMPORT ATP-BINDING PROTEIN METN"/>
    <property type="match status" value="1"/>
</dbReference>
<dbReference type="Pfam" id="PF00005">
    <property type="entry name" value="ABC_tran"/>
    <property type="match status" value="1"/>
</dbReference>
<dbReference type="Pfam" id="PF09383">
    <property type="entry name" value="NIL"/>
    <property type="match status" value="1"/>
</dbReference>
<dbReference type="SMART" id="SM00382">
    <property type="entry name" value="AAA"/>
    <property type="match status" value="1"/>
</dbReference>
<dbReference type="SMART" id="SM00930">
    <property type="entry name" value="NIL"/>
    <property type="match status" value="1"/>
</dbReference>
<dbReference type="SUPFAM" id="SSF55021">
    <property type="entry name" value="ACT-like"/>
    <property type="match status" value="1"/>
</dbReference>
<dbReference type="SUPFAM" id="SSF52540">
    <property type="entry name" value="P-loop containing nucleoside triphosphate hydrolases"/>
    <property type="match status" value="1"/>
</dbReference>
<dbReference type="PROSITE" id="PS00211">
    <property type="entry name" value="ABC_TRANSPORTER_1"/>
    <property type="match status" value="1"/>
</dbReference>
<dbReference type="PROSITE" id="PS50893">
    <property type="entry name" value="ABC_TRANSPORTER_2"/>
    <property type="match status" value="1"/>
</dbReference>
<dbReference type="PROSITE" id="PS51264">
    <property type="entry name" value="METN"/>
    <property type="match status" value="1"/>
</dbReference>